<dbReference type="EMBL" id="CP000724">
    <property type="protein sequence ID" value="ABR49038.1"/>
    <property type="molecule type" value="Genomic_DNA"/>
</dbReference>
<dbReference type="RefSeq" id="WP_012064006.1">
    <property type="nucleotide sequence ID" value="NC_009633.1"/>
</dbReference>
<dbReference type="SMR" id="A6TS70"/>
<dbReference type="STRING" id="293826.Amet_2888"/>
<dbReference type="KEGG" id="amt:Amet_2888"/>
<dbReference type="eggNOG" id="COG2001">
    <property type="taxonomic scope" value="Bacteria"/>
</dbReference>
<dbReference type="HOGENOM" id="CLU_107907_0_5_9"/>
<dbReference type="OrthoDB" id="9807753at2"/>
<dbReference type="Proteomes" id="UP000001572">
    <property type="component" value="Chromosome"/>
</dbReference>
<dbReference type="GO" id="GO:0005737">
    <property type="term" value="C:cytoplasm"/>
    <property type="evidence" value="ECO:0007669"/>
    <property type="project" value="UniProtKB-UniRule"/>
</dbReference>
<dbReference type="GO" id="GO:0009295">
    <property type="term" value="C:nucleoid"/>
    <property type="evidence" value="ECO:0007669"/>
    <property type="project" value="UniProtKB-SubCell"/>
</dbReference>
<dbReference type="GO" id="GO:0003700">
    <property type="term" value="F:DNA-binding transcription factor activity"/>
    <property type="evidence" value="ECO:0007669"/>
    <property type="project" value="UniProtKB-UniRule"/>
</dbReference>
<dbReference type="GO" id="GO:0000976">
    <property type="term" value="F:transcription cis-regulatory region binding"/>
    <property type="evidence" value="ECO:0007669"/>
    <property type="project" value="TreeGrafter"/>
</dbReference>
<dbReference type="GO" id="GO:2000143">
    <property type="term" value="P:negative regulation of DNA-templated transcription initiation"/>
    <property type="evidence" value="ECO:0007669"/>
    <property type="project" value="TreeGrafter"/>
</dbReference>
<dbReference type="CDD" id="cd16321">
    <property type="entry name" value="MraZ_C"/>
    <property type="match status" value="1"/>
</dbReference>
<dbReference type="CDD" id="cd16320">
    <property type="entry name" value="MraZ_N"/>
    <property type="match status" value="1"/>
</dbReference>
<dbReference type="FunFam" id="3.40.1550.20:FF:000002">
    <property type="entry name" value="Transcriptional regulator MraZ"/>
    <property type="match status" value="1"/>
</dbReference>
<dbReference type="Gene3D" id="3.40.1550.20">
    <property type="entry name" value="Transcriptional regulator MraZ domain"/>
    <property type="match status" value="1"/>
</dbReference>
<dbReference type="HAMAP" id="MF_01008">
    <property type="entry name" value="MraZ"/>
    <property type="match status" value="1"/>
</dbReference>
<dbReference type="InterPro" id="IPR003444">
    <property type="entry name" value="MraZ"/>
</dbReference>
<dbReference type="InterPro" id="IPR035644">
    <property type="entry name" value="MraZ_C"/>
</dbReference>
<dbReference type="InterPro" id="IPR020603">
    <property type="entry name" value="MraZ_dom"/>
</dbReference>
<dbReference type="InterPro" id="IPR035642">
    <property type="entry name" value="MraZ_N"/>
</dbReference>
<dbReference type="InterPro" id="IPR038619">
    <property type="entry name" value="MraZ_sf"/>
</dbReference>
<dbReference type="InterPro" id="IPR007159">
    <property type="entry name" value="SpoVT-AbrB_dom"/>
</dbReference>
<dbReference type="InterPro" id="IPR037914">
    <property type="entry name" value="SpoVT-AbrB_sf"/>
</dbReference>
<dbReference type="NCBIfam" id="TIGR00242">
    <property type="entry name" value="division/cell wall cluster transcriptional repressor MraZ"/>
    <property type="match status" value="1"/>
</dbReference>
<dbReference type="PANTHER" id="PTHR34701">
    <property type="entry name" value="TRANSCRIPTIONAL REGULATOR MRAZ"/>
    <property type="match status" value="1"/>
</dbReference>
<dbReference type="PANTHER" id="PTHR34701:SF1">
    <property type="entry name" value="TRANSCRIPTIONAL REGULATOR MRAZ"/>
    <property type="match status" value="1"/>
</dbReference>
<dbReference type="Pfam" id="PF02381">
    <property type="entry name" value="MraZ"/>
    <property type="match status" value="2"/>
</dbReference>
<dbReference type="SUPFAM" id="SSF89447">
    <property type="entry name" value="AbrB/MazE/MraZ-like"/>
    <property type="match status" value="1"/>
</dbReference>
<dbReference type="PROSITE" id="PS51740">
    <property type="entry name" value="SPOVT_ABRB"/>
    <property type="match status" value="2"/>
</dbReference>
<gene>
    <name evidence="1" type="primary">mraZ</name>
    <name type="ordered locus">Amet_2888</name>
</gene>
<organism>
    <name type="scientific">Alkaliphilus metalliredigens (strain QYMF)</name>
    <dbReference type="NCBI Taxonomy" id="293826"/>
    <lineage>
        <taxon>Bacteria</taxon>
        <taxon>Bacillati</taxon>
        <taxon>Bacillota</taxon>
        <taxon>Clostridia</taxon>
        <taxon>Peptostreptococcales</taxon>
        <taxon>Natronincolaceae</taxon>
        <taxon>Alkaliphilus</taxon>
    </lineage>
</organism>
<reference key="1">
    <citation type="journal article" date="2016" name="Genome Announc.">
        <title>Complete genome sequence of Alkaliphilus metalliredigens strain QYMF, an alkaliphilic and metal-reducing bacterium isolated from borax-contaminated leachate ponds.</title>
        <authorList>
            <person name="Hwang C."/>
            <person name="Copeland A."/>
            <person name="Lucas S."/>
            <person name="Lapidus A."/>
            <person name="Barry K."/>
            <person name="Detter J.C."/>
            <person name="Glavina Del Rio T."/>
            <person name="Hammon N."/>
            <person name="Israni S."/>
            <person name="Dalin E."/>
            <person name="Tice H."/>
            <person name="Pitluck S."/>
            <person name="Chertkov O."/>
            <person name="Brettin T."/>
            <person name="Bruce D."/>
            <person name="Han C."/>
            <person name="Schmutz J."/>
            <person name="Larimer F."/>
            <person name="Land M.L."/>
            <person name="Hauser L."/>
            <person name="Kyrpides N."/>
            <person name="Mikhailova N."/>
            <person name="Ye Q."/>
            <person name="Zhou J."/>
            <person name="Richardson P."/>
            <person name="Fields M.W."/>
        </authorList>
    </citation>
    <scope>NUCLEOTIDE SEQUENCE [LARGE SCALE GENOMIC DNA]</scope>
    <source>
        <strain>QYMF</strain>
    </source>
</reference>
<name>MRAZ_ALKMQ</name>
<sequence>MFIGEYNHSIDSKGRLSVPSRFREELGDRFILTKGLDNCLFVYSMDEWKVLEDKLKKLPLTNRDARAFVRFFFSGATECELDNQGRIRIPNNLRSHAYLEKEVIVIGVATRIEIWSSDQWGQYNDDSNLSYDEIANRMEELGI</sequence>
<comment type="subunit">
    <text evidence="1">Forms oligomers.</text>
</comment>
<comment type="subcellular location">
    <subcellularLocation>
        <location evidence="1">Cytoplasm</location>
        <location evidence="1">Nucleoid</location>
    </subcellularLocation>
</comment>
<comment type="similarity">
    <text evidence="1">Belongs to the MraZ family.</text>
</comment>
<proteinExistence type="inferred from homology"/>
<feature type="chain" id="PRO_1000062842" description="Transcriptional regulator MraZ">
    <location>
        <begin position="1"/>
        <end position="143"/>
    </location>
</feature>
<feature type="domain" description="SpoVT-AbrB 1" evidence="2">
    <location>
        <begin position="5"/>
        <end position="47"/>
    </location>
</feature>
<feature type="domain" description="SpoVT-AbrB 2" evidence="2">
    <location>
        <begin position="76"/>
        <end position="119"/>
    </location>
</feature>
<keyword id="KW-0963">Cytoplasm</keyword>
<keyword id="KW-0238">DNA-binding</keyword>
<keyword id="KW-1185">Reference proteome</keyword>
<keyword id="KW-0677">Repeat</keyword>
<keyword id="KW-0804">Transcription</keyword>
<keyword id="KW-0805">Transcription regulation</keyword>
<protein>
    <recommendedName>
        <fullName>Transcriptional regulator MraZ</fullName>
    </recommendedName>
</protein>
<accession>A6TS70</accession>
<evidence type="ECO:0000255" key="1">
    <source>
        <dbReference type="HAMAP-Rule" id="MF_01008"/>
    </source>
</evidence>
<evidence type="ECO:0000255" key="2">
    <source>
        <dbReference type="PROSITE-ProRule" id="PRU01076"/>
    </source>
</evidence>